<reference key="1">
    <citation type="journal article" date="2002" name="Nature">
        <title>The genome sequence of Schizosaccharomyces pombe.</title>
        <authorList>
            <person name="Wood V."/>
            <person name="Gwilliam R."/>
            <person name="Rajandream M.A."/>
            <person name="Lyne M.H."/>
            <person name="Lyne R."/>
            <person name="Stewart A."/>
            <person name="Sgouros J.G."/>
            <person name="Peat N."/>
            <person name="Hayles J."/>
            <person name="Baker S.G."/>
            <person name="Basham D."/>
            <person name="Bowman S."/>
            <person name="Brooks K."/>
            <person name="Brown D."/>
            <person name="Brown S."/>
            <person name="Chillingworth T."/>
            <person name="Churcher C.M."/>
            <person name="Collins M."/>
            <person name="Connor R."/>
            <person name="Cronin A."/>
            <person name="Davis P."/>
            <person name="Feltwell T."/>
            <person name="Fraser A."/>
            <person name="Gentles S."/>
            <person name="Goble A."/>
            <person name="Hamlin N."/>
            <person name="Harris D.E."/>
            <person name="Hidalgo J."/>
            <person name="Hodgson G."/>
            <person name="Holroyd S."/>
            <person name="Hornsby T."/>
            <person name="Howarth S."/>
            <person name="Huckle E.J."/>
            <person name="Hunt S."/>
            <person name="Jagels K."/>
            <person name="James K.D."/>
            <person name="Jones L."/>
            <person name="Jones M."/>
            <person name="Leather S."/>
            <person name="McDonald S."/>
            <person name="McLean J."/>
            <person name="Mooney P."/>
            <person name="Moule S."/>
            <person name="Mungall K.L."/>
            <person name="Murphy L.D."/>
            <person name="Niblett D."/>
            <person name="Odell C."/>
            <person name="Oliver K."/>
            <person name="O'Neil S."/>
            <person name="Pearson D."/>
            <person name="Quail M.A."/>
            <person name="Rabbinowitsch E."/>
            <person name="Rutherford K.M."/>
            <person name="Rutter S."/>
            <person name="Saunders D."/>
            <person name="Seeger K."/>
            <person name="Sharp S."/>
            <person name="Skelton J."/>
            <person name="Simmonds M.N."/>
            <person name="Squares R."/>
            <person name="Squares S."/>
            <person name="Stevens K."/>
            <person name="Taylor K."/>
            <person name="Taylor R.G."/>
            <person name="Tivey A."/>
            <person name="Walsh S.V."/>
            <person name="Warren T."/>
            <person name="Whitehead S."/>
            <person name="Woodward J.R."/>
            <person name="Volckaert G."/>
            <person name="Aert R."/>
            <person name="Robben J."/>
            <person name="Grymonprez B."/>
            <person name="Weltjens I."/>
            <person name="Vanstreels E."/>
            <person name="Rieger M."/>
            <person name="Schaefer M."/>
            <person name="Mueller-Auer S."/>
            <person name="Gabel C."/>
            <person name="Fuchs M."/>
            <person name="Duesterhoeft A."/>
            <person name="Fritzc C."/>
            <person name="Holzer E."/>
            <person name="Moestl D."/>
            <person name="Hilbert H."/>
            <person name="Borzym K."/>
            <person name="Langer I."/>
            <person name="Beck A."/>
            <person name="Lehrach H."/>
            <person name="Reinhardt R."/>
            <person name="Pohl T.M."/>
            <person name="Eger P."/>
            <person name="Zimmermann W."/>
            <person name="Wedler H."/>
            <person name="Wambutt R."/>
            <person name="Purnelle B."/>
            <person name="Goffeau A."/>
            <person name="Cadieu E."/>
            <person name="Dreano S."/>
            <person name="Gloux S."/>
            <person name="Lelaure V."/>
            <person name="Mottier S."/>
            <person name="Galibert F."/>
            <person name="Aves S.J."/>
            <person name="Xiang Z."/>
            <person name="Hunt C."/>
            <person name="Moore K."/>
            <person name="Hurst S.M."/>
            <person name="Lucas M."/>
            <person name="Rochet M."/>
            <person name="Gaillardin C."/>
            <person name="Tallada V.A."/>
            <person name="Garzon A."/>
            <person name="Thode G."/>
            <person name="Daga R.R."/>
            <person name="Cruzado L."/>
            <person name="Jimenez J."/>
            <person name="Sanchez M."/>
            <person name="del Rey F."/>
            <person name="Benito J."/>
            <person name="Dominguez A."/>
            <person name="Revuelta J.L."/>
            <person name="Moreno S."/>
            <person name="Armstrong J."/>
            <person name="Forsburg S.L."/>
            <person name="Cerutti L."/>
            <person name="Lowe T."/>
            <person name="McCombie W.R."/>
            <person name="Paulsen I."/>
            <person name="Potashkin J."/>
            <person name="Shpakovski G.V."/>
            <person name="Ussery D."/>
            <person name="Barrell B.G."/>
            <person name="Nurse P."/>
        </authorList>
    </citation>
    <scope>NUCLEOTIDE SEQUENCE [LARGE SCALE GENOMIC DNA]</scope>
    <source>
        <strain>972 / ATCC 24843</strain>
    </source>
</reference>
<reference key="2">
    <citation type="journal article" date="2002" name="FEBS Lett.">
        <title>A DMSO-sensitive conditional mutant of the fission yeast orthologue of the Saccharomyces cerevisiae SEC13 gene is defective in septation.</title>
        <authorList>
            <person name="Poloni D."/>
            <person name="Simanis V."/>
        </authorList>
    </citation>
    <scope>FUNCTION</scope>
</reference>
<reference key="3">
    <citation type="journal article" date="2008" name="J. Proteome Res.">
        <title>Phosphoproteome analysis of fission yeast.</title>
        <authorList>
            <person name="Wilson-Grady J.T."/>
            <person name="Villen J."/>
            <person name="Gygi S.P."/>
        </authorList>
    </citation>
    <scope>PHOSPHORYLATION [LARGE SCALE ANALYSIS] AT SER-29</scope>
    <scope>IDENTIFICATION BY MASS SPECTROMETRY</scope>
</reference>
<gene>
    <name type="primary">sec13</name>
    <name type="ORF">SPBC215.15</name>
</gene>
<protein>
    <recommendedName>
        <fullName>Protein transport protein sec13</fullName>
    </recommendedName>
</protein>
<evidence type="ECO:0000250" key="1"/>
<evidence type="ECO:0000250" key="2">
    <source>
        <dbReference type="UniProtKB" id="Q04491"/>
    </source>
</evidence>
<evidence type="ECO:0000269" key="3">
    <source>
    </source>
</evidence>
<evidence type="ECO:0000269" key="4">
    <source>
    </source>
</evidence>
<evidence type="ECO:0000305" key="5"/>
<comment type="function">
    <text evidence="2 3">Component of the coat protein complex II (COPII) which promotes the formation of transport vesicles from the endoplasmic reticulum (ER). The coat has two main functions, the physical deformation of the endoplasmic reticulum membrane into vesicles and the selection of cargo molecules. It also functions as a component of the nuclear pore complex (NPC). NPC components, collectively referred to as nucleoporins (NUPs), can play the role of both NPC structural components and of docking or interaction partners for transiently associated nuclear transport factors. SEC13 is required for efficient mRNA export from the nucleus to the cytoplasm and for correct nuclear pore biogenesis and distribution (By similarity). Involved in septum formation.</text>
</comment>
<comment type="subunit">
    <text evidence="2">The COPII coat is composed of at least 5 proteins: the sec23/24 complex, the sec13/31 complex, and the protein sar1. Component of the nuclear pore complex (NPC). NPC constitutes the exclusive means of nucleocytoplasmic transport. NPCs allow the passive diffusion of ions and small molecules and the active, nuclear transport receptor-mediated bidirectional transport of macromolecules such as proteins, RNAs, ribonucleoparticles (RNPs), and ribosomal subunits across the nuclear envelope. Due to its 8-fold rotational symmetry, all subunits are present with 8 copies or multiples thereof.</text>
</comment>
<comment type="subcellular location">
    <subcellularLocation>
        <location evidence="1">Cytoplasmic vesicle</location>
        <location evidence="1">COPII-coated vesicle membrane</location>
        <topology evidence="1">Peripheral membrane protein</topology>
        <orientation evidence="1">Cytoplasmic side</orientation>
    </subcellularLocation>
    <subcellularLocation>
        <location evidence="1">Endoplasmic reticulum membrane</location>
        <topology evidence="1">Peripheral membrane protein</topology>
        <orientation evidence="1">Cytoplasmic side</orientation>
    </subcellularLocation>
    <subcellularLocation>
        <location evidence="2">Nucleus</location>
        <location evidence="2">Nuclear pore complex</location>
    </subcellularLocation>
</comment>
<comment type="similarity">
    <text evidence="5">Belongs to the WD repeat SEC13 family.</text>
</comment>
<accession>O94319</accession>
<proteinExistence type="evidence at protein level"/>
<sequence length="297" mass="32568">MTTVDTQHDDMIHDAILDYYGKRLATCSSDQTIKVFSIENNQQTLLETLRGHSGPVWQLGWAHPKFGTILASASYDGHVIVWRETGGVWSELMDHTAHQASVNAVSWAPHEYGALLACASSDGKVSVLEFKDDGSCDTRIFTAHEPGCNAVCWSPPSLSGSVVGQSPAAGPKKLATAGCDNLVKIWAFDAGVNNWILEDTLAGHVDWTRDVAWAPSVGLTKTYLASASQDKNVFIWTKEGDGPWQKTPLTEEKFPDIAWRVSWSLSGNILAVSCGDNKVYLFKESQNKWQLLNELSN</sequence>
<name>SEC13_SCHPO</name>
<keyword id="KW-0968">Cytoplasmic vesicle</keyword>
<keyword id="KW-0256">Endoplasmic reticulum</keyword>
<keyword id="KW-0931">ER-Golgi transport</keyword>
<keyword id="KW-0472">Membrane</keyword>
<keyword id="KW-0509">mRNA transport</keyword>
<keyword id="KW-0906">Nuclear pore complex</keyword>
<keyword id="KW-0539">Nucleus</keyword>
<keyword id="KW-0597">Phosphoprotein</keyword>
<keyword id="KW-0653">Protein transport</keyword>
<keyword id="KW-1185">Reference proteome</keyword>
<keyword id="KW-0677">Repeat</keyword>
<keyword id="KW-0811">Translocation</keyword>
<keyword id="KW-0813">Transport</keyword>
<keyword id="KW-0853">WD repeat</keyword>
<dbReference type="EMBL" id="CU329671">
    <property type="protein sequence ID" value="CAA22129.1"/>
    <property type="molecule type" value="Genomic_DNA"/>
</dbReference>
<dbReference type="PIR" id="T39905">
    <property type="entry name" value="T39905"/>
</dbReference>
<dbReference type="RefSeq" id="NP_596692.1">
    <property type="nucleotide sequence ID" value="NM_001022615.2"/>
</dbReference>
<dbReference type="SMR" id="O94319"/>
<dbReference type="BioGRID" id="277239">
    <property type="interactions" value="7"/>
</dbReference>
<dbReference type="FunCoup" id="O94319">
    <property type="interactions" value="775"/>
</dbReference>
<dbReference type="IntAct" id="O94319">
    <property type="interactions" value="1"/>
</dbReference>
<dbReference type="STRING" id="284812.O94319"/>
<dbReference type="iPTMnet" id="O94319"/>
<dbReference type="PaxDb" id="4896-SPBC215.15.1"/>
<dbReference type="EnsemblFungi" id="SPBC215.15.1">
    <property type="protein sequence ID" value="SPBC215.15.1:pep"/>
    <property type="gene ID" value="SPBC215.15"/>
</dbReference>
<dbReference type="GeneID" id="2540716"/>
<dbReference type="KEGG" id="spo:2540716"/>
<dbReference type="PomBase" id="SPBC215.15">
    <property type="gene designation" value="sec13"/>
</dbReference>
<dbReference type="VEuPathDB" id="FungiDB:SPBC215.15"/>
<dbReference type="eggNOG" id="KOG1332">
    <property type="taxonomic scope" value="Eukaryota"/>
</dbReference>
<dbReference type="HOGENOM" id="CLU_032441_0_1_1"/>
<dbReference type="InParanoid" id="O94319"/>
<dbReference type="OMA" id="IWKEEGD"/>
<dbReference type="PhylomeDB" id="O94319"/>
<dbReference type="Reactome" id="R-SPO-159227">
    <property type="pathway name" value="Transport of the SLBP independent Mature mRNA"/>
</dbReference>
<dbReference type="Reactome" id="R-SPO-159231">
    <property type="pathway name" value="Transport of Mature mRNA Derived from an Intronless Transcript"/>
</dbReference>
<dbReference type="Reactome" id="R-SPO-159236">
    <property type="pathway name" value="Transport of Mature mRNA derived from an Intron-Containing Transcript"/>
</dbReference>
<dbReference type="Reactome" id="R-SPO-204005">
    <property type="pathway name" value="COPII-mediated vesicle transport"/>
</dbReference>
<dbReference type="Reactome" id="R-SPO-3371453">
    <property type="pathway name" value="Regulation of HSF1-mediated heat shock response"/>
</dbReference>
<dbReference type="Reactome" id="R-SPO-4085377">
    <property type="pathway name" value="SUMOylation of SUMOylation proteins"/>
</dbReference>
<dbReference type="Reactome" id="R-SPO-4551638">
    <property type="pathway name" value="SUMOylation of chromatin organization proteins"/>
</dbReference>
<dbReference type="Reactome" id="R-SPO-4570464">
    <property type="pathway name" value="SUMOylation of RNA binding proteins"/>
</dbReference>
<dbReference type="Reactome" id="R-SPO-5578749">
    <property type="pathway name" value="Transcriptional regulation by small RNAs"/>
</dbReference>
<dbReference type="Reactome" id="R-SPO-9615933">
    <property type="pathway name" value="Postmitotic nuclear pore complex (NPC) reformation"/>
</dbReference>
<dbReference type="PRO" id="PR:O94319"/>
<dbReference type="Proteomes" id="UP000002485">
    <property type="component" value="Chromosome II"/>
</dbReference>
<dbReference type="GO" id="GO:0030127">
    <property type="term" value="C:COPII vesicle coat"/>
    <property type="evidence" value="ECO:0000318"/>
    <property type="project" value="GO_Central"/>
</dbReference>
<dbReference type="GO" id="GO:0005737">
    <property type="term" value="C:cytoplasm"/>
    <property type="evidence" value="ECO:0000314"/>
    <property type="project" value="PomBase"/>
</dbReference>
<dbReference type="GO" id="GO:0005829">
    <property type="term" value="C:cytosol"/>
    <property type="evidence" value="ECO:0007005"/>
    <property type="project" value="PomBase"/>
</dbReference>
<dbReference type="GO" id="GO:0005789">
    <property type="term" value="C:endoplasmic reticulum membrane"/>
    <property type="evidence" value="ECO:0007669"/>
    <property type="project" value="UniProtKB-SubCell"/>
</dbReference>
<dbReference type="GO" id="GO:0061700">
    <property type="term" value="C:GATOR2 complex"/>
    <property type="evidence" value="ECO:0000353"/>
    <property type="project" value="PomBase"/>
</dbReference>
<dbReference type="GO" id="GO:0031080">
    <property type="term" value="C:nuclear pore outer ring"/>
    <property type="evidence" value="ECO:0000318"/>
    <property type="project" value="GO_Central"/>
</dbReference>
<dbReference type="GO" id="GO:0005634">
    <property type="term" value="C:nucleus"/>
    <property type="evidence" value="ECO:0007005"/>
    <property type="project" value="PomBase"/>
</dbReference>
<dbReference type="GO" id="GO:0005198">
    <property type="term" value="F:structural molecule activity"/>
    <property type="evidence" value="ECO:0000318"/>
    <property type="project" value="GO_Central"/>
</dbReference>
<dbReference type="GO" id="GO:0090114">
    <property type="term" value="P:COPII-coated vesicle budding"/>
    <property type="evidence" value="ECO:0000318"/>
    <property type="project" value="GO_Central"/>
</dbReference>
<dbReference type="GO" id="GO:0051028">
    <property type="term" value="P:mRNA transport"/>
    <property type="evidence" value="ECO:0007669"/>
    <property type="project" value="UniProtKB-KW"/>
</dbReference>
<dbReference type="GO" id="GO:0032008">
    <property type="term" value="P:positive regulation of TOR signaling"/>
    <property type="evidence" value="ECO:0000318"/>
    <property type="project" value="GO_Central"/>
</dbReference>
<dbReference type="GO" id="GO:0032527">
    <property type="term" value="P:protein exit from endoplasmic reticulum"/>
    <property type="evidence" value="ECO:0000318"/>
    <property type="project" value="GO_Central"/>
</dbReference>
<dbReference type="GO" id="GO:0006606">
    <property type="term" value="P:protein import into nucleus"/>
    <property type="evidence" value="ECO:0000318"/>
    <property type="project" value="GO_Central"/>
</dbReference>
<dbReference type="FunFam" id="2.130.10.10:FF:000017">
    <property type="entry name" value="SEC13 homolog (S. cerevisiae)"/>
    <property type="match status" value="1"/>
</dbReference>
<dbReference type="Gene3D" id="2.130.10.10">
    <property type="entry name" value="YVTN repeat-like/Quinoprotein amine dehydrogenase"/>
    <property type="match status" value="1"/>
</dbReference>
<dbReference type="InterPro" id="IPR037363">
    <property type="entry name" value="Sec13/Seh1_fam"/>
</dbReference>
<dbReference type="InterPro" id="IPR015943">
    <property type="entry name" value="WD40/YVTN_repeat-like_dom_sf"/>
</dbReference>
<dbReference type="InterPro" id="IPR036322">
    <property type="entry name" value="WD40_repeat_dom_sf"/>
</dbReference>
<dbReference type="InterPro" id="IPR001680">
    <property type="entry name" value="WD40_rpt"/>
</dbReference>
<dbReference type="PANTHER" id="PTHR11024">
    <property type="entry name" value="NUCLEAR PORE COMPLEX PROTEIN SEC13 / SEH1 FAMILY MEMBER"/>
    <property type="match status" value="1"/>
</dbReference>
<dbReference type="PANTHER" id="PTHR11024:SF2">
    <property type="entry name" value="PROTEIN SEC13 HOMOLOG"/>
    <property type="match status" value="1"/>
</dbReference>
<dbReference type="Pfam" id="PF00400">
    <property type="entry name" value="WD40"/>
    <property type="match status" value="5"/>
</dbReference>
<dbReference type="SMART" id="SM00320">
    <property type="entry name" value="WD40"/>
    <property type="match status" value="6"/>
</dbReference>
<dbReference type="SUPFAM" id="SSF50978">
    <property type="entry name" value="WD40 repeat-like"/>
    <property type="match status" value="1"/>
</dbReference>
<dbReference type="PROSITE" id="PS50082">
    <property type="entry name" value="WD_REPEATS_2"/>
    <property type="match status" value="2"/>
</dbReference>
<dbReference type="PROSITE" id="PS50294">
    <property type="entry name" value="WD_REPEATS_REGION"/>
    <property type="match status" value="1"/>
</dbReference>
<feature type="chain" id="PRO_0000295423" description="Protein transport protein sec13">
    <location>
        <begin position="1"/>
        <end position="297"/>
    </location>
</feature>
<feature type="repeat" description="WD 1">
    <location>
        <begin position="7"/>
        <end position="46"/>
    </location>
</feature>
<feature type="repeat" description="WD 2">
    <location>
        <begin position="51"/>
        <end position="92"/>
    </location>
</feature>
<feature type="repeat" description="WD 3">
    <location>
        <begin position="97"/>
        <end position="138"/>
    </location>
</feature>
<feature type="repeat" description="WD 4">
    <location>
        <begin position="143"/>
        <end position="196"/>
    </location>
</feature>
<feature type="repeat" description="WD 5">
    <location>
        <begin position="203"/>
        <end position="246"/>
    </location>
</feature>
<feature type="repeat" description="WD 6">
    <location>
        <begin position="253"/>
        <end position="292"/>
    </location>
</feature>
<feature type="modified residue" description="Phosphoserine" evidence="4">
    <location>
        <position position="29"/>
    </location>
</feature>
<organism>
    <name type="scientific">Schizosaccharomyces pombe (strain 972 / ATCC 24843)</name>
    <name type="common">Fission yeast</name>
    <dbReference type="NCBI Taxonomy" id="284812"/>
    <lineage>
        <taxon>Eukaryota</taxon>
        <taxon>Fungi</taxon>
        <taxon>Dikarya</taxon>
        <taxon>Ascomycota</taxon>
        <taxon>Taphrinomycotina</taxon>
        <taxon>Schizosaccharomycetes</taxon>
        <taxon>Schizosaccharomycetales</taxon>
        <taxon>Schizosaccharomycetaceae</taxon>
        <taxon>Schizosaccharomyces</taxon>
    </lineage>
</organism>